<organism>
    <name type="scientific">Lacticaseibacillus casei (strain BL23)</name>
    <name type="common">Lactobacillus casei</name>
    <dbReference type="NCBI Taxonomy" id="543734"/>
    <lineage>
        <taxon>Bacteria</taxon>
        <taxon>Bacillati</taxon>
        <taxon>Bacillota</taxon>
        <taxon>Bacilli</taxon>
        <taxon>Lactobacillales</taxon>
        <taxon>Lactobacillaceae</taxon>
        <taxon>Lacticaseibacillus</taxon>
    </lineage>
</organism>
<proteinExistence type="inferred from homology"/>
<keyword id="KW-0963">Cytoplasm</keyword>
<keyword id="KW-0227">DNA damage</keyword>
<keyword id="KW-0228">DNA excision</keyword>
<keyword id="KW-0234">DNA repair</keyword>
<keyword id="KW-0267">Excision nuclease</keyword>
<keyword id="KW-0742">SOS response</keyword>
<evidence type="ECO:0000255" key="1">
    <source>
        <dbReference type="HAMAP-Rule" id="MF_00203"/>
    </source>
</evidence>
<comment type="function">
    <text evidence="1">The UvrABC repair system catalyzes the recognition and processing of DNA lesions. UvrC both incises the 5' and 3' sides of the lesion. The N-terminal half is responsible for the 3' incision and the C-terminal half is responsible for the 5' incision.</text>
</comment>
<comment type="subunit">
    <text evidence="1">Interacts with UvrB in an incision complex.</text>
</comment>
<comment type="subcellular location">
    <subcellularLocation>
        <location evidence="1">Cytoplasm</location>
    </subcellularLocation>
</comment>
<comment type="similarity">
    <text evidence="1">Belongs to the UvrC family.</text>
</comment>
<reference key="1">
    <citation type="submission" date="2008-06" db="EMBL/GenBank/DDBJ databases">
        <title>Lactobacillus casei BL23 complete genome sequence.</title>
        <authorList>
            <person name="Maze A."/>
            <person name="Boel G."/>
            <person name="Bourand A."/>
            <person name="Loux V."/>
            <person name="Gibrat J.F."/>
            <person name="Zuniga M."/>
            <person name="Hartke A."/>
            <person name="Deutscher J."/>
        </authorList>
    </citation>
    <scope>NUCLEOTIDE SEQUENCE [LARGE SCALE GENOMIC DNA]</scope>
    <source>
        <strain>BL23</strain>
    </source>
</reference>
<sequence length="602" mass="68874">MASAHIEHKLSLLPDLPGSYQMKDINGKIIYVGKAKNLKNRVRSYFKSSHDGKVAAMVSQVADFDFIVTSTDKEAFLLEITLIQKYQPYYNIKLKKGTGYPYIKITHERDPKIEITGTIRKDGGYYFGPYPNVYAAQETMHFIQKVYPLRRCNGYQGRPCLYYHMGQCLGACFRTVPEKEYTDQIERIKRFLNGNVGKAKASLTAKMERAAKNLQFERAAEIRDQLHYIEQTVEKQKIISHDNTTRDLFNFYMDKGWISIQVFFIRQARLMKRESRLFPVVNTAKEEFESFILQFYSRKNNVKPREVLVPAALDNKVLADILEIPVRTPQRGEKRDLMALAAKNSQIKLEDKFRLMELDNRTTIGAMKELMAALNLPMGHVAEAFDHSHIQGADPVSAMVQFVDGQPAKNNYRKYKLDADKTHNGADEAANTREVIRRRYTRLLKERAPLPDLILMDGGEIEMNAAKDVLENELNLDIPVAGMVKNNKHKTAALLFGNADQLINLDPKSQGFYLLERIQDEVHRFAITFHRQLHAKNSLASRLEGIKGVGPKTRLKLLRKFKTINKIKEAPLEDIQELGISKKVAQALKLSLTAEPTPARRV</sequence>
<gene>
    <name evidence="1" type="primary">uvrC</name>
    <name type="ordered locus">LCABL_15670</name>
</gene>
<dbReference type="EMBL" id="FM177140">
    <property type="protein sequence ID" value="CAQ66648.1"/>
    <property type="molecule type" value="Genomic_DNA"/>
</dbReference>
<dbReference type="SMR" id="B3WE47"/>
<dbReference type="KEGG" id="lcb:LCABL_15670"/>
<dbReference type="HOGENOM" id="CLU_014841_3_2_9"/>
<dbReference type="GO" id="GO:0005737">
    <property type="term" value="C:cytoplasm"/>
    <property type="evidence" value="ECO:0007669"/>
    <property type="project" value="UniProtKB-SubCell"/>
</dbReference>
<dbReference type="GO" id="GO:0009380">
    <property type="term" value="C:excinuclease repair complex"/>
    <property type="evidence" value="ECO:0007669"/>
    <property type="project" value="InterPro"/>
</dbReference>
<dbReference type="GO" id="GO:0003677">
    <property type="term" value="F:DNA binding"/>
    <property type="evidence" value="ECO:0007669"/>
    <property type="project" value="UniProtKB-UniRule"/>
</dbReference>
<dbReference type="GO" id="GO:0009381">
    <property type="term" value="F:excinuclease ABC activity"/>
    <property type="evidence" value="ECO:0007669"/>
    <property type="project" value="UniProtKB-UniRule"/>
</dbReference>
<dbReference type="GO" id="GO:0006289">
    <property type="term" value="P:nucleotide-excision repair"/>
    <property type="evidence" value="ECO:0007669"/>
    <property type="project" value="UniProtKB-UniRule"/>
</dbReference>
<dbReference type="GO" id="GO:0009432">
    <property type="term" value="P:SOS response"/>
    <property type="evidence" value="ECO:0007669"/>
    <property type="project" value="UniProtKB-UniRule"/>
</dbReference>
<dbReference type="CDD" id="cd10434">
    <property type="entry name" value="GIY-YIG_UvrC_Cho"/>
    <property type="match status" value="1"/>
</dbReference>
<dbReference type="FunFam" id="3.30.420.340:FF:000002">
    <property type="entry name" value="UvrABC system protein C"/>
    <property type="match status" value="1"/>
</dbReference>
<dbReference type="FunFam" id="3.40.1440.10:FF:000001">
    <property type="entry name" value="UvrABC system protein C"/>
    <property type="match status" value="1"/>
</dbReference>
<dbReference type="Gene3D" id="1.10.150.20">
    <property type="entry name" value="5' to 3' exonuclease, C-terminal subdomain"/>
    <property type="match status" value="1"/>
</dbReference>
<dbReference type="Gene3D" id="3.40.1440.10">
    <property type="entry name" value="GIY-YIG endonuclease"/>
    <property type="match status" value="1"/>
</dbReference>
<dbReference type="Gene3D" id="4.10.860.10">
    <property type="entry name" value="UVR domain"/>
    <property type="match status" value="1"/>
</dbReference>
<dbReference type="Gene3D" id="3.30.420.340">
    <property type="entry name" value="UvrC, RNAse H endonuclease domain"/>
    <property type="match status" value="1"/>
</dbReference>
<dbReference type="HAMAP" id="MF_00203">
    <property type="entry name" value="UvrC"/>
    <property type="match status" value="1"/>
</dbReference>
<dbReference type="InterPro" id="IPR000305">
    <property type="entry name" value="GIY-YIG_endonuc"/>
</dbReference>
<dbReference type="InterPro" id="IPR035901">
    <property type="entry name" value="GIY-YIG_endonuc_sf"/>
</dbReference>
<dbReference type="InterPro" id="IPR047296">
    <property type="entry name" value="GIY-YIG_UvrC_Cho"/>
</dbReference>
<dbReference type="InterPro" id="IPR010994">
    <property type="entry name" value="RuvA_2-like"/>
</dbReference>
<dbReference type="InterPro" id="IPR001943">
    <property type="entry name" value="UVR_dom"/>
</dbReference>
<dbReference type="InterPro" id="IPR036876">
    <property type="entry name" value="UVR_dom_sf"/>
</dbReference>
<dbReference type="InterPro" id="IPR050066">
    <property type="entry name" value="UvrABC_protein_C"/>
</dbReference>
<dbReference type="InterPro" id="IPR004791">
    <property type="entry name" value="UvrC"/>
</dbReference>
<dbReference type="InterPro" id="IPR001162">
    <property type="entry name" value="UvrC_RNase_H_dom"/>
</dbReference>
<dbReference type="InterPro" id="IPR038476">
    <property type="entry name" value="UvrC_RNase_H_dom_sf"/>
</dbReference>
<dbReference type="NCBIfam" id="TIGR00194">
    <property type="entry name" value="uvrC"/>
    <property type="match status" value="1"/>
</dbReference>
<dbReference type="PANTHER" id="PTHR30562:SF1">
    <property type="entry name" value="UVRABC SYSTEM PROTEIN C"/>
    <property type="match status" value="1"/>
</dbReference>
<dbReference type="PANTHER" id="PTHR30562">
    <property type="entry name" value="UVRC/OXIDOREDUCTASE"/>
    <property type="match status" value="1"/>
</dbReference>
<dbReference type="Pfam" id="PF01541">
    <property type="entry name" value="GIY-YIG"/>
    <property type="match status" value="1"/>
</dbReference>
<dbReference type="Pfam" id="PF14520">
    <property type="entry name" value="HHH_5"/>
    <property type="match status" value="1"/>
</dbReference>
<dbReference type="Pfam" id="PF02151">
    <property type="entry name" value="UVR"/>
    <property type="match status" value="1"/>
</dbReference>
<dbReference type="Pfam" id="PF22920">
    <property type="entry name" value="UvrC_RNaseH"/>
    <property type="match status" value="1"/>
</dbReference>
<dbReference type="Pfam" id="PF08459">
    <property type="entry name" value="UvrC_RNaseH_dom"/>
    <property type="match status" value="1"/>
</dbReference>
<dbReference type="SMART" id="SM00465">
    <property type="entry name" value="GIYc"/>
    <property type="match status" value="1"/>
</dbReference>
<dbReference type="SUPFAM" id="SSF46600">
    <property type="entry name" value="C-terminal UvrC-binding domain of UvrB"/>
    <property type="match status" value="1"/>
</dbReference>
<dbReference type="SUPFAM" id="SSF82771">
    <property type="entry name" value="GIY-YIG endonuclease"/>
    <property type="match status" value="1"/>
</dbReference>
<dbReference type="SUPFAM" id="SSF47781">
    <property type="entry name" value="RuvA domain 2-like"/>
    <property type="match status" value="1"/>
</dbReference>
<dbReference type="PROSITE" id="PS50164">
    <property type="entry name" value="GIY_YIG"/>
    <property type="match status" value="1"/>
</dbReference>
<dbReference type="PROSITE" id="PS50151">
    <property type="entry name" value="UVR"/>
    <property type="match status" value="1"/>
</dbReference>
<dbReference type="PROSITE" id="PS50165">
    <property type="entry name" value="UVRC"/>
    <property type="match status" value="1"/>
</dbReference>
<feature type="chain" id="PRO_1000099495" description="UvrABC system protein C">
    <location>
        <begin position="1"/>
        <end position="602"/>
    </location>
</feature>
<feature type="domain" description="GIY-YIG" evidence="1">
    <location>
        <begin position="15"/>
        <end position="92"/>
    </location>
</feature>
<feature type="domain" description="UVR" evidence="1">
    <location>
        <begin position="197"/>
        <end position="232"/>
    </location>
</feature>
<accession>B3WE47</accession>
<protein>
    <recommendedName>
        <fullName evidence="1">UvrABC system protein C</fullName>
        <shortName evidence="1">Protein UvrC</shortName>
    </recommendedName>
    <alternativeName>
        <fullName evidence="1">Excinuclease ABC subunit C</fullName>
    </alternativeName>
</protein>
<name>UVRC_LACCB</name>